<feature type="chain" id="PRO_0000087913" description="DNA-cytosine methyltransferase">
    <location>
        <begin position="1"/>
        <end position="472"/>
    </location>
</feature>
<feature type="domain" description="SAM-dependent MTase C5-type" evidence="1">
    <location>
        <begin position="87"/>
        <end position="457"/>
    </location>
</feature>
<feature type="active site" evidence="1 2">
    <location>
        <position position="177"/>
    </location>
</feature>
<gene>
    <name evidence="4" type="primary">dcm</name>
    <name type="synonym">mec</name>
    <name type="ordered locus">b1961</name>
    <name type="ordered locus">JW1944</name>
</gene>
<evidence type="ECO:0000255" key="1">
    <source>
        <dbReference type="PROSITE-ProRule" id="PRU01016"/>
    </source>
</evidence>
<evidence type="ECO:0000255" key="2">
    <source>
        <dbReference type="PROSITE-ProRule" id="PRU10018"/>
    </source>
</evidence>
<evidence type="ECO:0000303" key="3">
    <source>
    </source>
</evidence>
<evidence type="ECO:0000303" key="4">
    <source>
    </source>
</evidence>
<evidence type="ECO:0000305" key="5">
    <source>
    </source>
</evidence>
<protein>
    <recommendedName>
        <fullName>DNA-cytosine methyltransferase</fullName>
        <ecNumber>2.1.1.37</ecNumber>
    </recommendedName>
    <alternativeName>
        <fullName evidence="3">Type II methyltransferase M.EcoKDcm</fullName>
        <shortName evidence="3">M.EcoKDcm</shortName>
    </alternativeName>
</protein>
<comment type="function">
    <text evidence="3 5">This methylase recognizes the double-stranded sequence 5'-CCWGG-3', methylates C-2 on both strands.</text>
</comment>
<comment type="catalytic activity">
    <reaction evidence="2">
        <text>a 2'-deoxycytidine in DNA + S-adenosyl-L-methionine = a 5-methyl-2'-deoxycytidine in DNA + S-adenosyl-L-homocysteine + H(+)</text>
        <dbReference type="Rhea" id="RHEA:13681"/>
        <dbReference type="Rhea" id="RHEA-COMP:11369"/>
        <dbReference type="Rhea" id="RHEA-COMP:11370"/>
        <dbReference type="ChEBI" id="CHEBI:15378"/>
        <dbReference type="ChEBI" id="CHEBI:57856"/>
        <dbReference type="ChEBI" id="CHEBI:59789"/>
        <dbReference type="ChEBI" id="CHEBI:85452"/>
        <dbReference type="ChEBI" id="CHEBI:85454"/>
        <dbReference type="EC" id="2.1.1.37"/>
    </reaction>
</comment>
<comment type="interaction">
    <interactant intactId="EBI-548525">
        <id>P0AED9</id>
    </interactant>
    <interactant intactId="EBI-542707">
        <id>P06959</id>
        <label>aceF</label>
    </interactant>
    <organismsDiffer>false</organismsDiffer>
    <experiments>3</experiments>
</comment>
<comment type="similarity">
    <text evidence="1">Belongs to the class I-like SAM-binding methyltransferase superfamily. C5-methyltransferase family.</text>
</comment>
<accession>P0AED9</accession>
<accession>P11876</accession>
<reference key="1">
    <citation type="journal article" date="1989" name="Nucleic Acids Res.">
        <title>Nucleotide sequence of the dcm locus of Escherichia coli K12.</title>
        <authorList>
            <person name="Hanck T."/>
            <person name="Gerwin N."/>
            <person name="Fritz H.-J."/>
        </authorList>
    </citation>
    <scope>NUCLEOTIDE SEQUENCE [GENOMIC DNA]</scope>
    <source>
        <strain>K12</strain>
    </source>
</reference>
<reference key="2">
    <citation type="journal article" date="1990" name="J. Bacteriol.">
        <title>A gene required for very short patch repair in Escherichia coli is adjacent to the DNA cytosine methylase gene.</title>
        <authorList>
            <person name="Sohail A."/>
            <person name="Lieb M."/>
            <person name="Dar M."/>
            <person name="Bhagwat A.S."/>
        </authorList>
    </citation>
    <scope>NUCLEOTIDE SEQUENCE [GENOMIC DNA]</scope>
    <scope>FUNCTION</scope>
    <source>
        <strain>K12</strain>
    </source>
</reference>
<reference key="3">
    <citation type="journal article" date="1996" name="DNA Res.">
        <title>A 460-kb DNA sequence of the Escherichia coli K-12 genome corresponding to the 40.1-50.0 min region on the linkage map.</title>
        <authorList>
            <person name="Itoh T."/>
            <person name="Aiba H."/>
            <person name="Baba T."/>
            <person name="Fujita K."/>
            <person name="Hayashi K."/>
            <person name="Inada T."/>
            <person name="Isono K."/>
            <person name="Kasai H."/>
            <person name="Kimura S."/>
            <person name="Kitakawa M."/>
            <person name="Kitagawa M."/>
            <person name="Makino K."/>
            <person name="Miki T."/>
            <person name="Mizobuchi K."/>
            <person name="Mori H."/>
            <person name="Mori T."/>
            <person name="Motomura K."/>
            <person name="Nakade S."/>
            <person name="Nakamura Y."/>
            <person name="Nashimoto H."/>
            <person name="Nishio Y."/>
            <person name="Oshima T."/>
            <person name="Saito N."/>
            <person name="Sampei G."/>
            <person name="Seki Y."/>
            <person name="Sivasundaram S."/>
            <person name="Tagami H."/>
            <person name="Takeda J."/>
            <person name="Takemoto K."/>
            <person name="Wada C."/>
            <person name="Yamamoto Y."/>
            <person name="Horiuchi T."/>
        </authorList>
    </citation>
    <scope>NUCLEOTIDE SEQUENCE [LARGE SCALE GENOMIC DNA]</scope>
    <source>
        <strain>K12 / W3110 / ATCC 27325 / DSM 5911</strain>
    </source>
</reference>
<reference key="4">
    <citation type="journal article" date="1997" name="Science">
        <title>The complete genome sequence of Escherichia coli K-12.</title>
        <authorList>
            <person name="Blattner F.R."/>
            <person name="Plunkett G. III"/>
            <person name="Bloch C.A."/>
            <person name="Perna N.T."/>
            <person name="Burland V."/>
            <person name="Riley M."/>
            <person name="Collado-Vides J."/>
            <person name="Glasner J.D."/>
            <person name="Rode C.K."/>
            <person name="Mayhew G.F."/>
            <person name="Gregor J."/>
            <person name="Davis N.W."/>
            <person name="Kirkpatrick H.A."/>
            <person name="Goeden M.A."/>
            <person name="Rose D.J."/>
            <person name="Mau B."/>
            <person name="Shao Y."/>
        </authorList>
    </citation>
    <scope>NUCLEOTIDE SEQUENCE [LARGE SCALE GENOMIC DNA]</scope>
    <source>
        <strain>K12 / MG1655 / ATCC 47076</strain>
    </source>
</reference>
<reference key="5">
    <citation type="journal article" date="2006" name="Mol. Syst. Biol.">
        <title>Highly accurate genome sequences of Escherichia coli K-12 strains MG1655 and W3110.</title>
        <authorList>
            <person name="Hayashi K."/>
            <person name="Morooka N."/>
            <person name="Yamamoto Y."/>
            <person name="Fujita K."/>
            <person name="Isono K."/>
            <person name="Choi S."/>
            <person name="Ohtsubo E."/>
            <person name="Baba T."/>
            <person name="Wanner B.L."/>
            <person name="Mori H."/>
            <person name="Horiuchi T."/>
        </authorList>
    </citation>
    <scope>NUCLEOTIDE SEQUENCE [LARGE SCALE GENOMIC DNA]</scope>
    <source>
        <strain>K12 / W3110 / ATCC 27325 / DSM 5911</strain>
    </source>
</reference>
<reference key="6">
    <citation type="journal article" date="2003" name="Nucleic Acids Res.">
        <title>A nomenclature for restriction enzymes, DNA methyltransferases, homing endonucleases and their genes.</title>
        <authorList>
            <person name="Roberts R.J."/>
            <person name="Belfort M."/>
            <person name="Bestor T."/>
            <person name="Bhagwat A.S."/>
            <person name="Bickle T.A."/>
            <person name="Bitinaite J."/>
            <person name="Blumenthal R.M."/>
            <person name="Degtyarev S.K."/>
            <person name="Dryden D.T."/>
            <person name="Dybvig K."/>
            <person name="Firman K."/>
            <person name="Gromova E.S."/>
            <person name="Gumport R.I."/>
            <person name="Halford S.E."/>
            <person name="Hattman S."/>
            <person name="Heitman J."/>
            <person name="Hornby D.P."/>
            <person name="Janulaitis A."/>
            <person name="Jeltsch A."/>
            <person name="Josephsen J."/>
            <person name="Kiss A."/>
            <person name="Klaenhammer T.R."/>
            <person name="Kobayashi I."/>
            <person name="Kong H."/>
            <person name="Krueger D.H."/>
            <person name="Lacks S."/>
            <person name="Marinus M.G."/>
            <person name="Miyahara M."/>
            <person name="Morgan R.D."/>
            <person name="Murray N.E."/>
            <person name="Nagaraja V."/>
            <person name="Piekarowicz A."/>
            <person name="Pingoud A."/>
            <person name="Raleigh E."/>
            <person name="Rao D.N."/>
            <person name="Reich N."/>
            <person name="Repin V.E."/>
            <person name="Selker E.U."/>
            <person name="Shaw P.C."/>
            <person name="Stein D.C."/>
            <person name="Stoddard B.L."/>
            <person name="Szybalski W."/>
            <person name="Trautner T.A."/>
            <person name="Van Etten J.L."/>
            <person name="Vitor J.M."/>
            <person name="Wilson G.G."/>
            <person name="Xu S.Y."/>
        </authorList>
    </citation>
    <scope>NOMENCLATURE</scope>
</reference>
<proteinExistence type="evidence at protein level"/>
<organism>
    <name type="scientific">Escherichia coli (strain K12)</name>
    <dbReference type="NCBI Taxonomy" id="83333"/>
    <lineage>
        <taxon>Bacteria</taxon>
        <taxon>Pseudomonadati</taxon>
        <taxon>Pseudomonadota</taxon>
        <taxon>Gammaproteobacteria</taxon>
        <taxon>Enterobacterales</taxon>
        <taxon>Enterobacteriaceae</taxon>
        <taxon>Escherichia</taxon>
    </lineage>
</organism>
<name>DCM_ECOLI</name>
<dbReference type="EC" id="2.1.1.37"/>
<dbReference type="EMBL" id="X13330">
    <property type="protein sequence ID" value="CAA31705.1"/>
    <property type="molecule type" value="Genomic_DNA"/>
</dbReference>
<dbReference type="EMBL" id="M32307">
    <property type="protein sequence ID" value="AAA03723.1"/>
    <property type="molecule type" value="Unassigned_DNA"/>
</dbReference>
<dbReference type="EMBL" id="U00096">
    <property type="protein sequence ID" value="AAC75027.1"/>
    <property type="molecule type" value="Genomic_DNA"/>
</dbReference>
<dbReference type="EMBL" id="AP009048">
    <property type="protein sequence ID" value="BAA15788.1"/>
    <property type="molecule type" value="Genomic_DNA"/>
</dbReference>
<dbReference type="PIR" id="A37754">
    <property type="entry name" value="JS0263"/>
</dbReference>
<dbReference type="RefSeq" id="NP_416470.1">
    <property type="nucleotide sequence ID" value="NC_000913.3"/>
</dbReference>
<dbReference type="RefSeq" id="WP_001157239.1">
    <property type="nucleotide sequence ID" value="NZ_LN832404.1"/>
</dbReference>
<dbReference type="SMR" id="P0AED9"/>
<dbReference type="BioGRID" id="4260865">
    <property type="interactions" value="169"/>
</dbReference>
<dbReference type="BioGRID" id="850830">
    <property type="interactions" value="1"/>
</dbReference>
<dbReference type="DIP" id="DIP-47858N"/>
<dbReference type="FunCoup" id="P0AED9">
    <property type="interactions" value="91"/>
</dbReference>
<dbReference type="IntAct" id="P0AED9">
    <property type="interactions" value="21"/>
</dbReference>
<dbReference type="STRING" id="511145.b1961"/>
<dbReference type="REBASE" id="13374">
    <property type="entry name" value="M.EcoW3110DcmP"/>
</dbReference>
<dbReference type="REBASE" id="175268">
    <property type="entry name" value="M.Rga4872ORF487P"/>
</dbReference>
<dbReference type="REBASE" id="175271">
    <property type="entry name" value="M.Rga4872ORF19P"/>
</dbReference>
<dbReference type="REBASE" id="2397">
    <property type="entry name" value="M.EcoKDcm"/>
</dbReference>
<dbReference type="jPOST" id="P0AED9"/>
<dbReference type="PaxDb" id="511145-b1961"/>
<dbReference type="EnsemblBacteria" id="AAC75027">
    <property type="protein sequence ID" value="AAC75027"/>
    <property type="gene ID" value="b1961"/>
</dbReference>
<dbReference type="GeneID" id="86946876"/>
<dbReference type="GeneID" id="946479"/>
<dbReference type="KEGG" id="ecj:JW1944"/>
<dbReference type="KEGG" id="eco:b1961"/>
<dbReference type="KEGG" id="ecoc:C3026_11090"/>
<dbReference type="PATRIC" id="fig|1411691.4.peg.291"/>
<dbReference type="EchoBASE" id="EB0207"/>
<dbReference type="eggNOG" id="COG0270">
    <property type="taxonomic scope" value="Bacteria"/>
</dbReference>
<dbReference type="HOGENOM" id="CLU_006958_0_1_6"/>
<dbReference type="InParanoid" id="P0AED9"/>
<dbReference type="OMA" id="AGYRKGF"/>
<dbReference type="OrthoDB" id="9813719at2"/>
<dbReference type="PhylomeDB" id="P0AED9"/>
<dbReference type="BioCyc" id="EcoCyc:EG10211-MONOMER"/>
<dbReference type="BioCyc" id="MetaCyc:EG10211-MONOMER"/>
<dbReference type="BRENDA" id="2.1.1.37">
    <property type="organism ID" value="2026"/>
</dbReference>
<dbReference type="PRO" id="PR:P0AED9"/>
<dbReference type="Proteomes" id="UP000000625">
    <property type="component" value="Chromosome"/>
</dbReference>
<dbReference type="GO" id="GO:0003886">
    <property type="term" value="F:DNA (cytosine-5-)-methyltransferase activity"/>
    <property type="evidence" value="ECO:0000314"/>
    <property type="project" value="EcoCyc"/>
</dbReference>
<dbReference type="GO" id="GO:0003677">
    <property type="term" value="F:DNA binding"/>
    <property type="evidence" value="ECO:0000318"/>
    <property type="project" value="GO_Central"/>
</dbReference>
<dbReference type="GO" id="GO:0009307">
    <property type="term" value="P:DNA restriction-modification system"/>
    <property type="evidence" value="ECO:0007669"/>
    <property type="project" value="UniProtKB-KW"/>
</dbReference>
<dbReference type="GO" id="GO:0032259">
    <property type="term" value="P:methylation"/>
    <property type="evidence" value="ECO:0007669"/>
    <property type="project" value="UniProtKB-KW"/>
</dbReference>
<dbReference type="GO" id="GO:0044027">
    <property type="term" value="P:negative regulation of gene expression via chromosomal CpG island methylation"/>
    <property type="evidence" value="ECO:0000318"/>
    <property type="project" value="GO_Central"/>
</dbReference>
<dbReference type="CDD" id="cd00315">
    <property type="entry name" value="Cyt_C5_DNA_methylase"/>
    <property type="match status" value="1"/>
</dbReference>
<dbReference type="FunFam" id="3.40.50.150:FF:000180">
    <property type="entry name" value="Cytosine-specific methyltransferase"/>
    <property type="match status" value="1"/>
</dbReference>
<dbReference type="Gene3D" id="1.10.260.140">
    <property type="match status" value="1"/>
</dbReference>
<dbReference type="Gene3D" id="3.90.120.30">
    <property type="match status" value="1"/>
</dbReference>
<dbReference type="Gene3D" id="3.40.50.150">
    <property type="entry name" value="Vaccinia Virus protein VP39"/>
    <property type="match status" value="1"/>
</dbReference>
<dbReference type="InterPro" id="IPR050390">
    <property type="entry name" value="C5-Methyltransferase"/>
</dbReference>
<dbReference type="InterPro" id="IPR018117">
    <property type="entry name" value="C5_DNA_meth_AS"/>
</dbReference>
<dbReference type="InterPro" id="IPR001525">
    <property type="entry name" value="C5_MeTfrase"/>
</dbReference>
<dbReference type="InterPro" id="IPR031303">
    <property type="entry name" value="C5_meth_CS"/>
</dbReference>
<dbReference type="InterPro" id="IPR040743">
    <property type="entry name" value="DNA_meth_N"/>
</dbReference>
<dbReference type="InterPro" id="IPR029063">
    <property type="entry name" value="SAM-dependent_MTases_sf"/>
</dbReference>
<dbReference type="NCBIfam" id="TIGR00675">
    <property type="entry name" value="dcm"/>
    <property type="match status" value="1"/>
</dbReference>
<dbReference type="NCBIfam" id="NF007772">
    <property type="entry name" value="PRK10458.1"/>
    <property type="match status" value="1"/>
</dbReference>
<dbReference type="PANTHER" id="PTHR10629">
    <property type="entry name" value="CYTOSINE-SPECIFIC METHYLTRANSFERASE"/>
    <property type="match status" value="1"/>
</dbReference>
<dbReference type="PANTHER" id="PTHR10629:SF52">
    <property type="entry name" value="DNA (CYTOSINE-5)-METHYLTRANSFERASE 1"/>
    <property type="match status" value="1"/>
</dbReference>
<dbReference type="Pfam" id="PF18284">
    <property type="entry name" value="DNA_meth_N"/>
    <property type="match status" value="1"/>
</dbReference>
<dbReference type="Pfam" id="PF00145">
    <property type="entry name" value="DNA_methylase"/>
    <property type="match status" value="1"/>
</dbReference>
<dbReference type="PRINTS" id="PR00105">
    <property type="entry name" value="C5METTRFRASE"/>
</dbReference>
<dbReference type="SUPFAM" id="SSF53335">
    <property type="entry name" value="S-adenosyl-L-methionine-dependent methyltransferases"/>
    <property type="match status" value="1"/>
</dbReference>
<dbReference type="PROSITE" id="PS00094">
    <property type="entry name" value="C5_MTASE_1"/>
    <property type="match status" value="1"/>
</dbReference>
<dbReference type="PROSITE" id="PS00095">
    <property type="entry name" value="C5_MTASE_2"/>
    <property type="match status" value="1"/>
</dbReference>
<dbReference type="PROSITE" id="PS51679">
    <property type="entry name" value="SAM_MT_C5"/>
    <property type="match status" value="1"/>
</dbReference>
<sequence>MQENISVTDSYSTGNAAQAMLEKLLQIYDVKTLVAQLNGVGENHWSAAILKRALANDSAWHRLSEKEFAHLQTLLPKPPAHHPHYAFRFIDLFAGIGGIRRGFESIGGQCVFTSEWNKHAVRTYKANHYCDPATHHFNEDIRDITLSHKEGVSDEAAAEHIRQHIPEHDVLLAGFPCQPFSLAGVSKKNSLGRAHGFACDTQGTLFFDVVRIIDARRPAMFVLENVKNLKSHDQGKTFRIIMQTLDELGYDVADAEDNGPDDPKIIDGKHFLPQHRERIVLVGFRRDLNLKADFTLRDISECFPAQRVTLAQLLDPMVEAKYILTPVLWKYLYRYAKKHQARGNGFGYGMVYPNNPQSVTRTLSARYYKDGAEILIDRGWDMATGEKDFDDPLNQQHRPRRLTPRECARLMGFEAPGEAKFRIPVSDTQAYRQFGNSVVVPVFAAVAKLLEPKIKQAVALRQQEAQHGRRSR</sequence>
<keyword id="KW-0238">DNA-binding</keyword>
<keyword id="KW-0489">Methyltransferase</keyword>
<keyword id="KW-1185">Reference proteome</keyword>
<keyword id="KW-0680">Restriction system</keyword>
<keyword id="KW-0949">S-adenosyl-L-methionine</keyword>
<keyword id="KW-0808">Transferase</keyword>